<keyword id="KW-1185">Reference proteome</keyword>
<gene>
    <name type="ordered locus">Nham_3550</name>
</gene>
<protein>
    <recommendedName>
        <fullName evidence="1">UPF0301 protein Nham_3550</fullName>
    </recommendedName>
</protein>
<comment type="similarity">
    <text evidence="1">Belongs to the UPF0301 (AlgH) family.</text>
</comment>
<evidence type="ECO:0000255" key="1">
    <source>
        <dbReference type="HAMAP-Rule" id="MF_00758"/>
    </source>
</evidence>
<evidence type="ECO:0000256" key="2">
    <source>
        <dbReference type="SAM" id="MobiDB-lite"/>
    </source>
</evidence>
<name>Y3550_NITHX</name>
<reference key="1">
    <citation type="submission" date="2006-03" db="EMBL/GenBank/DDBJ databases">
        <title>Complete sequence of chromosome of Nitrobacter hamburgensis X14.</title>
        <authorList>
            <consortium name="US DOE Joint Genome Institute"/>
            <person name="Copeland A."/>
            <person name="Lucas S."/>
            <person name="Lapidus A."/>
            <person name="Barry K."/>
            <person name="Detter J.C."/>
            <person name="Glavina del Rio T."/>
            <person name="Hammon N."/>
            <person name="Israni S."/>
            <person name="Dalin E."/>
            <person name="Tice H."/>
            <person name="Pitluck S."/>
            <person name="Chain P."/>
            <person name="Malfatti S."/>
            <person name="Shin M."/>
            <person name="Vergez L."/>
            <person name="Schmutz J."/>
            <person name="Larimer F."/>
            <person name="Land M."/>
            <person name="Hauser L."/>
            <person name="Kyrpides N."/>
            <person name="Ivanova N."/>
            <person name="Ward B."/>
            <person name="Arp D."/>
            <person name="Klotz M."/>
            <person name="Stein L."/>
            <person name="O'Mullan G."/>
            <person name="Starkenburg S."/>
            <person name="Sayavedra L."/>
            <person name="Poret-Peterson A.T."/>
            <person name="Gentry M.E."/>
            <person name="Bruce D."/>
            <person name="Richardson P."/>
        </authorList>
    </citation>
    <scope>NUCLEOTIDE SEQUENCE [LARGE SCALE GENOMIC DNA]</scope>
    <source>
        <strain>DSM 10229 / NCIMB 13809 / X14</strain>
    </source>
</reference>
<sequence length="216" mass="23185">MSAARKRPGTGRRQTDDADTGAPDQSYLDGQLLIAMPVMEDERFARSVIYVCAHSSEGAMGIILNRPAGSVDFADLLVQLDIIKRSDSIKLPETAEAMKVMKGGPVETGRGFVLHSSDFFIEDATLPIDDGVCLTATLDILEAIAKGAGPKHAILALGYAGWAPGQLETEIQDNGWLHCPADPELIFGRDIEDKYTRALHKIGIDPGMLSNEAGHA</sequence>
<accession>Q1QHL8</accession>
<feature type="chain" id="PRO_0000258845" description="UPF0301 protein Nham_3550">
    <location>
        <begin position="1"/>
        <end position="216"/>
    </location>
</feature>
<feature type="region of interest" description="Disordered" evidence="2">
    <location>
        <begin position="1"/>
        <end position="25"/>
    </location>
</feature>
<feature type="compositionally biased region" description="Basic residues" evidence="2">
    <location>
        <begin position="1"/>
        <end position="10"/>
    </location>
</feature>
<proteinExistence type="inferred from homology"/>
<organism>
    <name type="scientific">Nitrobacter hamburgensis (strain DSM 10229 / NCIMB 13809 / X14)</name>
    <dbReference type="NCBI Taxonomy" id="323097"/>
    <lineage>
        <taxon>Bacteria</taxon>
        <taxon>Pseudomonadati</taxon>
        <taxon>Pseudomonadota</taxon>
        <taxon>Alphaproteobacteria</taxon>
        <taxon>Hyphomicrobiales</taxon>
        <taxon>Nitrobacteraceae</taxon>
        <taxon>Nitrobacter</taxon>
    </lineage>
</organism>
<dbReference type="EMBL" id="CP000319">
    <property type="protein sequence ID" value="ABE64279.1"/>
    <property type="molecule type" value="Genomic_DNA"/>
</dbReference>
<dbReference type="RefSeq" id="WP_011511921.1">
    <property type="nucleotide sequence ID" value="NC_007964.1"/>
</dbReference>
<dbReference type="SMR" id="Q1QHL8"/>
<dbReference type="STRING" id="323097.Nham_3550"/>
<dbReference type="KEGG" id="nha:Nham_3550"/>
<dbReference type="eggNOG" id="COG1678">
    <property type="taxonomic scope" value="Bacteria"/>
</dbReference>
<dbReference type="HOGENOM" id="CLU_057596_1_0_5"/>
<dbReference type="OrthoDB" id="9807486at2"/>
<dbReference type="Proteomes" id="UP000001953">
    <property type="component" value="Chromosome"/>
</dbReference>
<dbReference type="GO" id="GO:0005829">
    <property type="term" value="C:cytosol"/>
    <property type="evidence" value="ECO:0007669"/>
    <property type="project" value="TreeGrafter"/>
</dbReference>
<dbReference type="Gene3D" id="3.40.1740.10">
    <property type="entry name" value="VC0467-like"/>
    <property type="match status" value="1"/>
</dbReference>
<dbReference type="HAMAP" id="MF_00758">
    <property type="entry name" value="UPF0301"/>
    <property type="match status" value="1"/>
</dbReference>
<dbReference type="InterPro" id="IPR003774">
    <property type="entry name" value="AlgH-like"/>
</dbReference>
<dbReference type="NCBIfam" id="NF001266">
    <property type="entry name" value="PRK00228.1-1"/>
    <property type="match status" value="1"/>
</dbReference>
<dbReference type="NCBIfam" id="NF001268">
    <property type="entry name" value="PRK00228.1-4"/>
    <property type="match status" value="1"/>
</dbReference>
<dbReference type="PANTHER" id="PTHR30327">
    <property type="entry name" value="UNCHARACTERIZED PROTEIN YQGE"/>
    <property type="match status" value="1"/>
</dbReference>
<dbReference type="PANTHER" id="PTHR30327:SF1">
    <property type="entry name" value="UPF0301 PROTEIN YQGE"/>
    <property type="match status" value="1"/>
</dbReference>
<dbReference type="Pfam" id="PF02622">
    <property type="entry name" value="DUF179"/>
    <property type="match status" value="1"/>
</dbReference>
<dbReference type="SUPFAM" id="SSF143456">
    <property type="entry name" value="VC0467-like"/>
    <property type="match status" value="1"/>
</dbReference>